<name>SAMP1_HALVD</name>
<gene>
    <name type="primary">samp1</name>
    <name type="ordered locus">HVO_2619</name>
</gene>
<keyword id="KW-0002">3D-structure</keyword>
<keyword id="KW-1017">Isopeptide bond</keyword>
<keyword id="KW-0547">Nucleotide-binding</keyword>
<keyword id="KW-0597">Phosphoprotein</keyword>
<keyword id="KW-1185">Reference proteome</keyword>
<keyword id="KW-0833">Ubl conjugation pathway</keyword>
<sequence>MEWKLFADLAEVAGSRTVRVDVDGDATVGDALDALVGAHPALESRVFGDDGELYDHINVLRNGEAAALGEATAAGDELALFPPVSGG</sequence>
<comment type="function">
    <text evidence="1 2 3 4">Functions as a protein modifier covalently attached to lysine residues of substrate proteins, as well as a sulfur carrier in molybdenum cofactor (MoCo) biosynthesis. The protein modification process is termed sampylation and involves the formation of an isopeptide bond between the SAMP1 C-terminal glycine carboxylate and the epsilon-amino group of lysine residues on target proteins. May serve as a proteolytic signal in the cell to target proteins for degradation by proteasomes.</text>
</comment>
<comment type="PTM">
    <text evidence="2">The C-terminal glycine is likely acyl-adenylated (-COAMP) by UbaA, and also probably thiocarboxylated (-COSH) to function in sulfur transfer.</text>
</comment>
<comment type="disruption phenotype">
    <text evidence="2">Cells lacking this gene do not grow anaerobically with DMSO and do not show DMSO reductase activity, but their growth in the presence of oxygen and at 50 degrees Celsius is not affected. SAMP2 and SAMP3 cannot complement the samp1 mutation. tRNA thiolation is not affected.</text>
</comment>
<reference key="1">
    <citation type="journal article" date="2010" name="PLoS ONE">
        <title>The complete genome sequence of Haloferax volcanii DS2, a model archaeon.</title>
        <authorList>
            <person name="Hartman A.L."/>
            <person name="Norais C."/>
            <person name="Badger J.H."/>
            <person name="Delmas S."/>
            <person name="Haldenby S."/>
            <person name="Madupu R."/>
            <person name="Robinson J."/>
            <person name="Khouri H."/>
            <person name="Ren Q."/>
            <person name="Lowe T.M."/>
            <person name="Maupin-Furlow J."/>
            <person name="Pohlschroder M."/>
            <person name="Daniels C."/>
            <person name="Pfeiffer F."/>
            <person name="Allers T."/>
            <person name="Eisen J.A."/>
        </authorList>
    </citation>
    <scope>NUCLEOTIDE SEQUENCE [LARGE SCALE GENOMIC DNA]</scope>
    <source>
        <strain>ATCC 29605 / DSM 3757 / JCM 8879 / NBRC 14742 / NCIMB 2012 / VKM B-1768 / DS2</strain>
    </source>
</reference>
<reference key="2">
    <citation type="journal article" date="2010" name="Nature">
        <title>Ubiquitin-like small archaeal modifier proteins (SAMPs) in Haloferax volcanii.</title>
        <authorList>
            <person name="Humbard M.A."/>
            <person name="Miranda H.V."/>
            <person name="Lim J.M."/>
            <person name="Krause D.J."/>
            <person name="Pritz J.R."/>
            <person name="Zhou G."/>
            <person name="Chen S."/>
            <person name="Wells L."/>
            <person name="Maupin-Furlow J.A."/>
        </authorList>
    </citation>
    <scope>FUNCTION AS A PROTEIN MODIFIER</scope>
    <scope>MUTAGENESIS OF 86-GLY-GLY-87</scope>
    <source>
        <strain>ATCC 29605 / DSM 3757 / JCM 8879 / NBRC 14742 / NCIMB 2012 / VKM B-1768 / DS2</strain>
    </source>
</reference>
<reference key="3">
    <citation type="journal article" date="2010" name="Trends Biochem. Sci.">
        <title>SAMPyling proteins in archaea.</title>
        <authorList>
            <person name="Darwin K.H."/>
            <person name="Hofmann K."/>
        </authorList>
    </citation>
    <scope>REVIEW</scope>
</reference>
<reference key="4">
    <citation type="journal article" date="2011" name="Proc. Natl. Acad. Sci. U.S.A.">
        <title>E1- and ubiquitin-like proteins provide a direct link between protein conjugation and sulfur transfer in archaea.</title>
        <authorList>
            <person name="Miranda H.V."/>
            <person name="Nembhard N."/>
            <person name="Su D."/>
            <person name="Hepowit N."/>
            <person name="Krause D.J."/>
            <person name="Pritz J.R."/>
            <person name="Phillips C."/>
            <person name="Soll D."/>
            <person name="Maupin-Furlow J.A."/>
        </authorList>
    </citation>
    <scope>FUNCTION</scope>
    <scope>THIOCARBOXYLATION AT GLY-87</scope>
    <scope>AMPYLATION AT GLY-87</scope>
    <scope>DISRUPTION PHENOTYPE</scope>
    <source>
        <strain>DS2 / DS70</strain>
    </source>
</reference>
<reference key="5">
    <citation type="journal article" date="2012" name="Mol. Microbiol.">
        <title>Archaeal JAB1/MPN/MOV34 metalloenzyme (HvJAMM1) cleaves ubiquitin-like small archaeal modifier proteins (SAMPs) from protein-conjugates.</title>
        <authorList>
            <person name="Hepowit N.L."/>
            <person name="Uthandi S."/>
            <person name="Miranda H.V."/>
            <person name="Toniutti M."/>
            <person name="Prunetti L."/>
            <person name="Olivarez O."/>
            <person name="De Vera I.M."/>
            <person name="Fanucci G.E."/>
            <person name="Chen S."/>
            <person name="Maupin-Furlow J.A."/>
        </authorList>
    </citation>
    <scope>FUNCTION</scope>
    <scope>CROSS-LINK</scope>
    <source>
        <strain>DS2 / DS70</strain>
    </source>
</reference>
<reference key="6">
    <citation type="journal article" date="2014" name="Mol. Cell. Proteomics">
        <title>Archaeal ubiquitin-like SAMP3 is isopeptide-linked to proteins via a UbaA-dependent mechanism.</title>
        <authorList>
            <person name="Miranda H.V."/>
            <person name="Antelmann H."/>
            <person name="Hepowit N."/>
            <person name="Chavarria N.E."/>
            <person name="Krause D.J."/>
            <person name="Pritz J.R."/>
            <person name="Basell K."/>
            <person name="Becher D."/>
            <person name="Humbard M.A."/>
            <person name="Brocchieri L."/>
            <person name="Maupin-Furlow J.A."/>
        </authorList>
    </citation>
    <scope>FUNCTION</scope>
    <source>
        <strain>DS2 / DS70</strain>
    </source>
</reference>
<reference key="7">
    <citation type="submission" date="2011-01" db="PDB data bank">
        <title>A protein from Haloferax volcanii.</title>
        <authorList>
            <person name="Zhang W."/>
            <person name="Liao S."/>
            <person name="Fan K."/>
            <person name="Zhang J."/>
            <person name="Tu X."/>
        </authorList>
    </citation>
    <scope>STRUCTURE BY NMR</scope>
</reference>
<reference key="8">
    <citation type="journal article" date="2011" name="Biochem. Biophys. Res. Commun.">
        <title>Crystal structure of ubiquitin-like small archaeal modifier protein 1 (SAMP1) from Haloferax volcanii.</title>
        <authorList>
            <person name="Jeong Y.J."/>
            <person name="Jeong B.C."/>
            <person name="Song H.K."/>
        </authorList>
    </citation>
    <scope>X-RAY CRYSTALLOGRAPHY (1.55 ANGSTROMS)</scope>
</reference>
<reference key="9">
    <citation type="submission" date="2012-10" db="PDB data bank">
        <title>Crystal structure of H.volcanii small archaeal modifier protein 1.</title>
        <authorList>
            <person name="Li Y."/>
            <person name="Maciejewski M.W."/>
            <person name="Jin K."/>
            <person name="Martin J."/>
            <person name="Zhang Y."/>
            <person name="Lu M."/>
            <person name="Maupin-Furlow J.A."/>
            <person name="Hao B."/>
        </authorList>
    </citation>
    <scope>X-RAY CRYSTALLOGRAPHY (1.15 ANGSTROMS)</scope>
</reference>
<feature type="chain" id="PRO_0000397101" description="Small archaeal modifier protein 1">
    <location>
        <begin position="1"/>
        <end position="87"/>
    </location>
</feature>
<feature type="modified residue" description="1-thioglycine; alternate" evidence="2">
    <location>
        <position position="87"/>
    </location>
</feature>
<feature type="modified residue" description="Glycyl adenylate; alternate" evidence="2">
    <location>
        <position position="87"/>
    </location>
</feature>
<feature type="cross-link" description="Glycyl lysine isopeptide (Gly-Lys) (interchain with K-? in acceptor proteins); alternate">
    <location>
        <position position="87"/>
    </location>
</feature>
<feature type="mutagenesis site" description="Abolishes sampylation of substrate proteins." evidence="1">
    <location>
        <begin position="86"/>
        <end position="87"/>
    </location>
</feature>
<feature type="strand" evidence="5">
    <location>
        <begin position="1"/>
        <end position="5"/>
    </location>
</feature>
<feature type="helix" evidence="5">
    <location>
        <begin position="7"/>
        <end position="13"/>
    </location>
</feature>
<feature type="strand" evidence="5">
    <location>
        <begin position="15"/>
        <end position="22"/>
    </location>
</feature>
<feature type="helix" evidence="5">
    <location>
        <begin position="28"/>
        <end position="38"/>
    </location>
</feature>
<feature type="helix" evidence="5">
    <location>
        <begin position="40"/>
        <end position="42"/>
    </location>
</feature>
<feature type="helix" evidence="5">
    <location>
        <begin position="43"/>
        <end position="46"/>
    </location>
</feature>
<feature type="strand" evidence="5">
    <location>
        <begin position="58"/>
        <end position="61"/>
    </location>
</feature>
<feature type="strand" evidence="5">
    <location>
        <begin position="77"/>
        <end position="81"/>
    </location>
</feature>
<accession>D4GUF6</accession>
<evidence type="ECO:0000269" key="1">
    <source>
    </source>
</evidence>
<evidence type="ECO:0000269" key="2">
    <source>
    </source>
</evidence>
<evidence type="ECO:0000269" key="3">
    <source>
    </source>
</evidence>
<evidence type="ECO:0000269" key="4">
    <source>
    </source>
</evidence>
<evidence type="ECO:0007829" key="5">
    <source>
        <dbReference type="PDB" id="4HRO"/>
    </source>
</evidence>
<dbReference type="EMBL" id="CP001956">
    <property type="protein sequence ID" value="ADE04519.1"/>
    <property type="molecule type" value="Genomic_DNA"/>
</dbReference>
<dbReference type="RefSeq" id="WP_004042720.1">
    <property type="nucleotide sequence ID" value="NC_013967.1"/>
</dbReference>
<dbReference type="PDB" id="2L83">
    <property type="method" value="NMR"/>
    <property type="chains" value="A=1-87"/>
</dbReference>
<dbReference type="PDB" id="3PO0">
    <property type="method" value="X-ray"/>
    <property type="resolution" value="1.55 A"/>
    <property type="chains" value="A=1-87"/>
</dbReference>
<dbReference type="PDB" id="4HRO">
    <property type="method" value="X-ray"/>
    <property type="resolution" value="1.15 A"/>
    <property type="chains" value="A/B=1-87"/>
</dbReference>
<dbReference type="PDBsum" id="2L83"/>
<dbReference type="PDBsum" id="3PO0"/>
<dbReference type="PDBsum" id="4HRO"/>
<dbReference type="BMRB" id="D4GUF6"/>
<dbReference type="SMR" id="D4GUF6"/>
<dbReference type="STRING" id="309800.HVO_2619"/>
<dbReference type="PaxDb" id="309800-C498_08375"/>
<dbReference type="EnsemblBacteria" id="ADE04519">
    <property type="protein sequence ID" value="ADE04519"/>
    <property type="gene ID" value="HVO_2619"/>
</dbReference>
<dbReference type="GeneID" id="8925082"/>
<dbReference type="KEGG" id="hvo:HVO_2619"/>
<dbReference type="eggNOG" id="arCOG00536">
    <property type="taxonomic scope" value="Archaea"/>
</dbReference>
<dbReference type="HOGENOM" id="CLU_114601_1_2_2"/>
<dbReference type="EvolutionaryTrace" id="D4GUF6"/>
<dbReference type="Proteomes" id="UP000008243">
    <property type="component" value="Chromosome"/>
</dbReference>
<dbReference type="GO" id="GO:1990133">
    <property type="term" value="C:molybdopterin adenylyltransferase complex"/>
    <property type="evidence" value="ECO:0007669"/>
    <property type="project" value="TreeGrafter"/>
</dbReference>
<dbReference type="GO" id="GO:0000166">
    <property type="term" value="F:nucleotide binding"/>
    <property type="evidence" value="ECO:0007669"/>
    <property type="project" value="UniProtKB-KW"/>
</dbReference>
<dbReference type="GO" id="GO:0031386">
    <property type="term" value="F:protein tag activity"/>
    <property type="evidence" value="ECO:0000314"/>
    <property type="project" value="UniProtKB"/>
</dbReference>
<dbReference type="GO" id="GO:0006777">
    <property type="term" value="P:Mo-molybdopterin cofactor biosynthetic process"/>
    <property type="evidence" value="ECO:0007669"/>
    <property type="project" value="InterPro"/>
</dbReference>
<dbReference type="GO" id="GO:0032446">
    <property type="term" value="P:protein modification by small protein conjugation"/>
    <property type="evidence" value="ECO:0000314"/>
    <property type="project" value="UniProtKB"/>
</dbReference>
<dbReference type="CDD" id="cd17505">
    <property type="entry name" value="Ubl_SAMP1_like"/>
    <property type="match status" value="1"/>
</dbReference>
<dbReference type="FunFam" id="3.10.20.30:FF:000053">
    <property type="entry name" value="Molybdopterin synthase sulfur carrier subunit"/>
    <property type="match status" value="1"/>
</dbReference>
<dbReference type="Gene3D" id="3.10.20.30">
    <property type="match status" value="1"/>
</dbReference>
<dbReference type="InterPro" id="IPR012675">
    <property type="entry name" value="Beta-grasp_dom_sf"/>
</dbReference>
<dbReference type="InterPro" id="IPR010038">
    <property type="entry name" value="MoaD_arc-typ"/>
</dbReference>
<dbReference type="InterPro" id="IPR044672">
    <property type="entry name" value="MOCS2A"/>
</dbReference>
<dbReference type="InterPro" id="IPR016155">
    <property type="entry name" value="Mopterin_synth/thiamin_S_b"/>
</dbReference>
<dbReference type="InterPro" id="IPR054834">
    <property type="entry name" value="SAMP1_3"/>
</dbReference>
<dbReference type="InterPro" id="IPR003749">
    <property type="entry name" value="ThiS/MoaD-like"/>
</dbReference>
<dbReference type="NCBIfam" id="TIGR01687">
    <property type="entry name" value="moaD_arch"/>
    <property type="match status" value="1"/>
</dbReference>
<dbReference type="NCBIfam" id="NF041918">
    <property type="entry name" value="SAMP1"/>
    <property type="match status" value="1"/>
</dbReference>
<dbReference type="PANTHER" id="PTHR33359">
    <property type="entry name" value="MOLYBDOPTERIN SYNTHASE SULFUR CARRIER SUBUNIT"/>
    <property type="match status" value="1"/>
</dbReference>
<dbReference type="PANTHER" id="PTHR33359:SF1">
    <property type="entry name" value="MOLYBDOPTERIN SYNTHASE SULFUR CARRIER SUBUNIT"/>
    <property type="match status" value="1"/>
</dbReference>
<dbReference type="Pfam" id="PF02597">
    <property type="entry name" value="ThiS"/>
    <property type="match status" value="1"/>
</dbReference>
<dbReference type="SUPFAM" id="SSF54285">
    <property type="entry name" value="MoaD/ThiS"/>
    <property type="match status" value="1"/>
</dbReference>
<organism>
    <name type="scientific">Haloferax volcanii (strain ATCC 29605 / DSM 3757 / JCM 8879 / NBRC 14742 / NCIMB 2012 / VKM B-1768 / DS2)</name>
    <name type="common">Halobacterium volcanii</name>
    <dbReference type="NCBI Taxonomy" id="309800"/>
    <lineage>
        <taxon>Archaea</taxon>
        <taxon>Methanobacteriati</taxon>
        <taxon>Methanobacteriota</taxon>
        <taxon>Stenosarchaea group</taxon>
        <taxon>Halobacteria</taxon>
        <taxon>Halobacteriales</taxon>
        <taxon>Haloferacaceae</taxon>
        <taxon>Haloferax</taxon>
    </lineage>
</organism>
<proteinExistence type="evidence at protein level"/>
<protein>
    <recommendedName>
        <fullName>Small archaeal modifier protein 1</fullName>
        <shortName>SAMP1</shortName>
    </recommendedName>
    <alternativeName>
        <fullName>Ubiquitin-like small archaeal modifier protein 1</fullName>
    </alternativeName>
</protein>